<feature type="chain" id="PRO_0000351608" description="Autoinducer-2 kinase">
    <location>
        <begin position="1"/>
        <end position="530"/>
    </location>
</feature>
<accession>A7FMJ5</accession>
<name>LSRK_YERP3</name>
<evidence type="ECO:0000255" key="1">
    <source>
        <dbReference type="HAMAP-Rule" id="MF_02053"/>
    </source>
</evidence>
<keyword id="KW-0963">Cytoplasm</keyword>
<keyword id="KW-0418">Kinase</keyword>
<keyword id="KW-0808">Transferase</keyword>
<gene>
    <name evidence="1" type="primary">lsrK</name>
    <name type="ordered locus">YpsIP31758_3518</name>
</gene>
<proteinExistence type="inferred from homology"/>
<sequence length="530" mass="56995">MSQLDTTTPSGDYLMALDAGTGSVRAVIFDLNGNQIAAGQAEWLHLPVPDVPGSMEFDLTTNWQLTCQCIRQALHLAKLPASAIRAVAACSMREGIVLYDRSGTPIWACANVDARASREVSELKELHNNGFELEVYQCSGQTLALSAMPRLLWLAHYRPDIYRQAGTLTMISDWLANMLSGELAVDPSNAGTTGMLDLVTRNWQPNLLEMAGLRADILSPVKETGTLLGHVTAKAAQECGLLAGTPVVMGGGDVQLGCLGLGVVHAGQTAVLGGTFWQQVVNLPQPIIDPNMNTRINPHVIPGMVQAESISFFTGLTMRWFRDAFCAEEKLLAQRLGIDTYSLLEDMAARVPAGAYGVMPIFSDVMRFKSWYHAAPSFINLSLDPEKCNKATLFRALEENAAIVSACNLAQIAEFSGVKASSVVFAGGGAKGKLWSQILADVTGVPVKVPVVKEATALGCAIAAGVGVGLYEALDKTGERLVRWEREYIPNTEHKALYQAAKTNWQAVYTDQLGLVDCGLTTSLWKAPGL</sequence>
<dbReference type="EC" id="2.7.1.189" evidence="1"/>
<dbReference type="EMBL" id="CP000720">
    <property type="protein sequence ID" value="ABS47193.1"/>
    <property type="molecule type" value="Genomic_DNA"/>
</dbReference>
<dbReference type="RefSeq" id="WP_002230543.1">
    <property type="nucleotide sequence ID" value="NC_009708.1"/>
</dbReference>
<dbReference type="SMR" id="A7FMJ5"/>
<dbReference type="GeneID" id="96664058"/>
<dbReference type="KEGG" id="ypi:YpsIP31758_3518"/>
<dbReference type="HOGENOM" id="CLU_009281_3_4_6"/>
<dbReference type="Proteomes" id="UP000002412">
    <property type="component" value="Chromosome"/>
</dbReference>
<dbReference type="GO" id="GO:0005737">
    <property type="term" value="C:cytoplasm"/>
    <property type="evidence" value="ECO:0007669"/>
    <property type="project" value="UniProtKB-SubCell"/>
</dbReference>
<dbReference type="GO" id="GO:0071518">
    <property type="term" value="F:autoinducer-2 kinase activity"/>
    <property type="evidence" value="ECO:0007669"/>
    <property type="project" value="UniProtKB-UniRule"/>
</dbReference>
<dbReference type="GO" id="GO:0005975">
    <property type="term" value="P:carbohydrate metabolic process"/>
    <property type="evidence" value="ECO:0007669"/>
    <property type="project" value="InterPro"/>
</dbReference>
<dbReference type="GO" id="GO:0009372">
    <property type="term" value="P:quorum sensing"/>
    <property type="evidence" value="ECO:0007669"/>
    <property type="project" value="InterPro"/>
</dbReference>
<dbReference type="CDD" id="cd07775">
    <property type="entry name" value="ASKHA_NBD_FGGY_AI-2K"/>
    <property type="match status" value="1"/>
</dbReference>
<dbReference type="Gene3D" id="3.30.420.40">
    <property type="match status" value="2"/>
</dbReference>
<dbReference type="HAMAP" id="MF_02053">
    <property type="entry name" value="LsrK"/>
    <property type="match status" value="1"/>
</dbReference>
<dbReference type="InterPro" id="IPR033676">
    <property type="entry name" value="AI-2_kinase"/>
</dbReference>
<dbReference type="InterPro" id="IPR043129">
    <property type="entry name" value="ATPase_NBD"/>
</dbReference>
<dbReference type="InterPro" id="IPR000577">
    <property type="entry name" value="Carb_kinase_FGGY"/>
</dbReference>
<dbReference type="InterPro" id="IPR018485">
    <property type="entry name" value="FGGY_C"/>
</dbReference>
<dbReference type="InterPro" id="IPR050406">
    <property type="entry name" value="FGGY_Carb_Kinase"/>
</dbReference>
<dbReference type="InterPro" id="IPR018484">
    <property type="entry name" value="FGGY_N"/>
</dbReference>
<dbReference type="NCBIfam" id="NF008187">
    <property type="entry name" value="PRK10939.1"/>
    <property type="match status" value="1"/>
</dbReference>
<dbReference type="PANTHER" id="PTHR43095:SF1">
    <property type="entry name" value="AUTOINDUCER-2 KINASE"/>
    <property type="match status" value="1"/>
</dbReference>
<dbReference type="PANTHER" id="PTHR43095">
    <property type="entry name" value="SUGAR KINASE"/>
    <property type="match status" value="1"/>
</dbReference>
<dbReference type="Pfam" id="PF02782">
    <property type="entry name" value="FGGY_C"/>
    <property type="match status" value="1"/>
</dbReference>
<dbReference type="Pfam" id="PF00370">
    <property type="entry name" value="FGGY_N"/>
    <property type="match status" value="1"/>
</dbReference>
<dbReference type="PIRSF" id="PIRSF000538">
    <property type="entry name" value="GlpK"/>
    <property type="match status" value="1"/>
</dbReference>
<dbReference type="SUPFAM" id="SSF53067">
    <property type="entry name" value="Actin-like ATPase domain"/>
    <property type="match status" value="2"/>
</dbReference>
<reference key="1">
    <citation type="journal article" date="2007" name="PLoS Genet.">
        <title>The complete genome sequence of Yersinia pseudotuberculosis IP31758, the causative agent of Far East scarlet-like fever.</title>
        <authorList>
            <person name="Eppinger M."/>
            <person name="Rosovitz M.J."/>
            <person name="Fricke W.F."/>
            <person name="Rasko D.A."/>
            <person name="Kokorina G."/>
            <person name="Fayolle C."/>
            <person name="Lindler L.E."/>
            <person name="Carniel E."/>
            <person name="Ravel J."/>
        </authorList>
    </citation>
    <scope>NUCLEOTIDE SEQUENCE [LARGE SCALE GENOMIC DNA]</scope>
    <source>
        <strain>IP 31758</strain>
    </source>
</reference>
<protein>
    <recommendedName>
        <fullName evidence="1">Autoinducer-2 kinase</fullName>
        <shortName evidence="1">AI-2 kinase</shortName>
        <ecNumber evidence="1">2.7.1.189</ecNumber>
    </recommendedName>
</protein>
<comment type="function">
    <text evidence="1">Catalyzes the phosphorylation of autoinducer-2 (AI-2) to phospho-AI-2, which subsequently inactivates the transcriptional regulator LsrR and leads to the transcription of the lsr operon. Phosphorylates the ring-open form of (S)-4,5-dihydroxypentane-2,3-dione (DPD), which is the precursor to all AI-2 signaling molecules, at the C5 position.</text>
</comment>
<comment type="catalytic activity">
    <reaction evidence="1">
        <text>(S)-4,5-dihydroxypentane-2,3-dione + ATP = (2S)-2-hydroxy-3,4-dioxopentyl phosphate + ADP + H(+)</text>
        <dbReference type="Rhea" id="RHEA:15377"/>
        <dbReference type="ChEBI" id="CHEBI:15378"/>
        <dbReference type="ChEBI" id="CHEBI:29484"/>
        <dbReference type="ChEBI" id="CHEBI:30616"/>
        <dbReference type="ChEBI" id="CHEBI:71677"/>
        <dbReference type="ChEBI" id="CHEBI:456216"/>
        <dbReference type="EC" id="2.7.1.189"/>
    </reaction>
</comment>
<comment type="subcellular location">
    <subcellularLocation>
        <location evidence="1">Cytoplasm</location>
    </subcellularLocation>
</comment>
<comment type="similarity">
    <text evidence="1">Belongs to the FGGY kinase family.</text>
</comment>
<organism>
    <name type="scientific">Yersinia pseudotuberculosis serotype O:1b (strain IP 31758)</name>
    <dbReference type="NCBI Taxonomy" id="349747"/>
    <lineage>
        <taxon>Bacteria</taxon>
        <taxon>Pseudomonadati</taxon>
        <taxon>Pseudomonadota</taxon>
        <taxon>Gammaproteobacteria</taxon>
        <taxon>Enterobacterales</taxon>
        <taxon>Yersiniaceae</taxon>
        <taxon>Yersinia</taxon>
    </lineage>
</organism>